<sequence>MKAFLVGGAVRDRLLGLPVRERDWVVVGESPETMIARGFRPVGRDFPVFLHPETHEEYALARTERKTAPGYRGFVVHAAPDVTLEQDLERRDLTINAMAETPDGRLVDPFGGRRDLEARLLRHVSSAFAEDPVRILRVARFTARLTPLGFRVAPETLVEMRRMVEAGEVDALVPERVWAEFAKALAEPAPSAFFRTLRDCGALKRLFPEIERLFGVPQPPRHHPEIDTGVHTLMVLDQAARLTADPSARFAALTHDLGKALTPPELWPSHRGHERLGLGALNTLCDRFRAPNAFRRLAEKVMRYHGLCHRAAELRTSTLVDLLDRLGALKRHDDTLEPFLLACEADARGRAGFEERPYPQADWLREAQRAAVSVDSRPLIEQRLQGPAFGRALRQLRIAAVRRLRAARSPATPAGRLPHPQGEGE</sequence>
<name>CCA_METCA</name>
<reference key="1">
    <citation type="journal article" date="2004" name="PLoS Biol.">
        <title>Genomic insights into methanotrophy: the complete genome sequence of Methylococcus capsulatus (Bath).</title>
        <authorList>
            <person name="Ward N.L."/>
            <person name="Larsen O."/>
            <person name="Sakwa J."/>
            <person name="Bruseth L."/>
            <person name="Khouri H.M."/>
            <person name="Durkin A.S."/>
            <person name="Dimitrov G."/>
            <person name="Jiang L."/>
            <person name="Scanlan D."/>
            <person name="Kang K.H."/>
            <person name="Lewis M.R."/>
            <person name="Nelson K.E."/>
            <person name="Methe B.A."/>
            <person name="Wu M."/>
            <person name="Heidelberg J.F."/>
            <person name="Paulsen I.T."/>
            <person name="Fouts D.E."/>
            <person name="Ravel J."/>
            <person name="Tettelin H."/>
            <person name="Ren Q."/>
            <person name="Read T.D."/>
            <person name="DeBoy R.T."/>
            <person name="Seshadri R."/>
            <person name="Salzberg S.L."/>
            <person name="Jensen H.B."/>
            <person name="Birkeland N.K."/>
            <person name="Nelson W.C."/>
            <person name="Dodson R.J."/>
            <person name="Grindhaug S.H."/>
            <person name="Holt I.E."/>
            <person name="Eidhammer I."/>
            <person name="Jonasen I."/>
            <person name="Vanaken S."/>
            <person name="Utterback T.R."/>
            <person name="Feldblyum T.V."/>
            <person name="Fraser C.M."/>
            <person name="Lillehaug J.R."/>
            <person name="Eisen J.A."/>
        </authorList>
    </citation>
    <scope>NUCLEOTIDE SEQUENCE [LARGE SCALE GENOMIC DNA]</scope>
    <source>
        <strain>ATCC 33009 / NCIMB 11132 / Bath</strain>
    </source>
</reference>
<evidence type="ECO:0000255" key="1">
    <source>
        <dbReference type="HAMAP-Rule" id="MF_01261"/>
    </source>
</evidence>
<gene>
    <name evidence="1" type="primary">cca</name>
    <name type="ordered locus">MCA0022</name>
</gene>
<accession>Q60CQ4</accession>
<proteinExistence type="inferred from homology"/>
<protein>
    <recommendedName>
        <fullName evidence="1">Multifunctional CCA protein</fullName>
    </recommendedName>
    <domain>
        <recommendedName>
            <fullName evidence="1">CCA-adding enzyme</fullName>
            <ecNumber evidence="1">2.7.7.72</ecNumber>
        </recommendedName>
        <alternativeName>
            <fullName evidence="1">CCA tRNA nucleotidyltransferase</fullName>
        </alternativeName>
        <alternativeName>
            <fullName evidence="1">tRNA CCA-pyrophosphorylase</fullName>
        </alternativeName>
        <alternativeName>
            <fullName evidence="1">tRNA adenylyl-/cytidylyl-transferase</fullName>
        </alternativeName>
        <alternativeName>
            <fullName evidence="1">tRNA nucleotidyltransferase</fullName>
        </alternativeName>
        <alternativeName>
            <fullName evidence="1">tRNA-NT</fullName>
        </alternativeName>
    </domain>
    <domain>
        <recommendedName>
            <fullName evidence="1">2'-nucleotidase</fullName>
            <ecNumber evidence="1">3.1.3.-</ecNumber>
        </recommendedName>
    </domain>
    <domain>
        <recommendedName>
            <fullName evidence="1">2',3'-cyclic phosphodiesterase</fullName>
            <ecNumber evidence="1">3.1.4.-</ecNumber>
        </recommendedName>
    </domain>
    <domain>
        <recommendedName>
            <fullName evidence="1">Phosphatase</fullName>
            <ecNumber evidence="1">3.1.3.-</ecNumber>
        </recommendedName>
    </domain>
</protein>
<dbReference type="EC" id="2.7.7.72" evidence="1"/>
<dbReference type="EC" id="3.1.3.-" evidence="1"/>
<dbReference type="EC" id="3.1.4.-" evidence="1"/>
<dbReference type="EMBL" id="AE017282">
    <property type="protein sequence ID" value="AAU90718.1"/>
    <property type="molecule type" value="Genomic_DNA"/>
</dbReference>
<dbReference type="RefSeq" id="WP_010959395.1">
    <property type="nucleotide sequence ID" value="NC_002977.6"/>
</dbReference>
<dbReference type="SMR" id="Q60CQ4"/>
<dbReference type="STRING" id="243233.MCA0022"/>
<dbReference type="GeneID" id="88222375"/>
<dbReference type="KEGG" id="mca:MCA0022"/>
<dbReference type="eggNOG" id="COG0617">
    <property type="taxonomic scope" value="Bacteria"/>
</dbReference>
<dbReference type="HOGENOM" id="CLU_015961_1_1_6"/>
<dbReference type="Proteomes" id="UP000006821">
    <property type="component" value="Chromosome"/>
</dbReference>
<dbReference type="GO" id="GO:0005524">
    <property type="term" value="F:ATP binding"/>
    <property type="evidence" value="ECO:0007669"/>
    <property type="project" value="UniProtKB-UniRule"/>
</dbReference>
<dbReference type="GO" id="GO:0004810">
    <property type="term" value="F:CCA tRNA nucleotidyltransferase activity"/>
    <property type="evidence" value="ECO:0007669"/>
    <property type="project" value="UniProtKB-UniRule"/>
</dbReference>
<dbReference type="GO" id="GO:0004112">
    <property type="term" value="F:cyclic-nucleotide phosphodiesterase activity"/>
    <property type="evidence" value="ECO:0007669"/>
    <property type="project" value="UniProtKB-UniRule"/>
</dbReference>
<dbReference type="GO" id="GO:0000287">
    <property type="term" value="F:magnesium ion binding"/>
    <property type="evidence" value="ECO:0007669"/>
    <property type="project" value="UniProtKB-UniRule"/>
</dbReference>
<dbReference type="GO" id="GO:0016791">
    <property type="term" value="F:phosphatase activity"/>
    <property type="evidence" value="ECO:0007669"/>
    <property type="project" value="UniProtKB-UniRule"/>
</dbReference>
<dbReference type="GO" id="GO:0000049">
    <property type="term" value="F:tRNA binding"/>
    <property type="evidence" value="ECO:0007669"/>
    <property type="project" value="UniProtKB-UniRule"/>
</dbReference>
<dbReference type="GO" id="GO:0042245">
    <property type="term" value="P:RNA repair"/>
    <property type="evidence" value="ECO:0007669"/>
    <property type="project" value="UniProtKB-KW"/>
</dbReference>
<dbReference type="GO" id="GO:0001680">
    <property type="term" value="P:tRNA 3'-terminal CCA addition"/>
    <property type="evidence" value="ECO:0007669"/>
    <property type="project" value="UniProtKB-UniRule"/>
</dbReference>
<dbReference type="CDD" id="cd00077">
    <property type="entry name" value="HDc"/>
    <property type="match status" value="1"/>
</dbReference>
<dbReference type="CDD" id="cd05398">
    <property type="entry name" value="NT_ClassII-CCAase"/>
    <property type="match status" value="1"/>
</dbReference>
<dbReference type="Gene3D" id="3.30.460.10">
    <property type="entry name" value="Beta Polymerase, domain 2"/>
    <property type="match status" value="1"/>
</dbReference>
<dbReference type="Gene3D" id="1.10.3090.10">
    <property type="entry name" value="cca-adding enzyme, domain 2"/>
    <property type="match status" value="1"/>
</dbReference>
<dbReference type="HAMAP" id="MF_01261">
    <property type="entry name" value="CCA_bact_type1"/>
    <property type="match status" value="1"/>
</dbReference>
<dbReference type="HAMAP" id="MF_01262">
    <property type="entry name" value="CCA_bact_type2"/>
    <property type="match status" value="1"/>
</dbReference>
<dbReference type="InterPro" id="IPR012006">
    <property type="entry name" value="CCA_bact"/>
</dbReference>
<dbReference type="InterPro" id="IPR003607">
    <property type="entry name" value="HD/PDEase_dom"/>
</dbReference>
<dbReference type="InterPro" id="IPR006674">
    <property type="entry name" value="HD_domain"/>
</dbReference>
<dbReference type="InterPro" id="IPR043519">
    <property type="entry name" value="NT_sf"/>
</dbReference>
<dbReference type="InterPro" id="IPR002646">
    <property type="entry name" value="PolA_pol_head_dom"/>
</dbReference>
<dbReference type="InterPro" id="IPR032828">
    <property type="entry name" value="PolyA_RNA-bd"/>
</dbReference>
<dbReference type="InterPro" id="IPR050124">
    <property type="entry name" value="tRNA_CCA-adding_enzyme"/>
</dbReference>
<dbReference type="NCBIfam" id="NF008137">
    <property type="entry name" value="PRK10885.1"/>
    <property type="match status" value="1"/>
</dbReference>
<dbReference type="PANTHER" id="PTHR47545">
    <property type="entry name" value="MULTIFUNCTIONAL CCA PROTEIN"/>
    <property type="match status" value="1"/>
</dbReference>
<dbReference type="PANTHER" id="PTHR47545:SF1">
    <property type="entry name" value="MULTIFUNCTIONAL CCA PROTEIN"/>
    <property type="match status" value="1"/>
</dbReference>
<dbReference type="Pfam" id="PF01966">
    <property type="entry name" value="HD"/>
    <property type="match status" value="1"/>
</dbReference>
<dbReference type="Pfam" id="PF01743">
    <property type="entry name" value="PolyA_pol"/>
    <property type="match status" value="1"/>
</dbReference>
<dbReference type="Pfam" id="PF12627">
    <property type="entry name" value="PolyA_pol_RNAbd"/>
    <property type="match status" value="1"/>
</dbReference>
<dbReference type="PIRSF" id="PIRSF000813">
    <property type="entry name" value="CCA_bact"/>
    <property type="match status" value="1"/>
</dbReference>
<dbReference type="SUPFAM" id="SSF81301">
    <property type="entry name" value="Nucleotidyltransferase"/>
    <property type="match status" value="1"/>
</dbReference>
<dbReference type="SUPFAM" id="SSF81891">
    <property type="entry name" value="Poly A polymerase C-terminal region-like"/>
    <property type="match status" value="1"/>
</dbReference>
<dbReference type="PROSITE" id="PS51831">
    <property type="entry name" value="HD"/>
    <property type="match status" value="1"/>
</dbReference>
<organism>
    <name type="scientific">Methylococcus capsulatus (strain ATCC 33009 / NCIMB 11132 / Bath)</name>
    <dbReference type="NCBI Taxonomy" id="243233"/>
    <lineage>
        <taxon>Bacteria</taxon>
        <taxon>Pseudomonadati</taxon>
        <taxon>Pseudomonadota</taxon>
        <taxon>Gammaproteobacteria</taxon>
        <taxon>Methylococcales</taxon>
        <taxon>Methylococcaceae</taxon>
        <taxon>Methylococcus</taxon>
    </lineage>
</organism>
<comment type="function">
    <text evidence="1">Catalyzes the addition and repair of the essential 3'-terminal CCA sequence in tRNAs without using a nucleic acid template. Adds these three nucleotides in the order of C, C, and A to the tRNA nucleotide-73, using CTP and ATP as substrates and producing inorganic pyrophosphate. tRNA 3'-terminal CCA addition is required both for tRNA processing and repair. Also involved in tRNA surveillance by mediating tandem CCA addition to generate a CCACCA at the 3' terminus of unstable tRNAs. While stable tRNAs receive only 3'-terminal CCA, unstable tRNAs are marked with CCACCA and rapidly degraded.</text>
</comment>
<comment type="catalytic activity">
    <reaction evidence="1">
        <text>a tRNA precursor + 2 CTP + ATP = a tRNA with a 3' CCA end + 3 diphosphate</text>
        <dbReference type="Rhea" id="RHEA:14433"/>
        <dbReference type="Rhea" id="RHEA-COMP:10465"/>
        <dbReference type="Rhea" id="RHEA-COMP:10468"/>
        <dbReference type="ChEBI" id="CHEBI:30616"/>
        <dbReference type="ChEBI" id="CHEBI:33019"/>
        <dbReference type="ChEBI" id="CHEBI:37563"/>
        <dbReference type="ChEBI" id="CHEBI:74896"/>
        <dbReference type="ChEBI" id="CHEBI:83071"/>
        <dbReference type="EC" id="2.7.7.72"/>
    </reaction>
</comment>
<comment type="catalytic activity">
    <reaction evidence="1">
        <text>a tRNA with a 3' CCA end + 2 CTP + ATP = a tRNA with a 3' CCACCA end + 3 diphosphate</text>
        <dbReference type="Rhea" id="RHEA:76235"/>
        <dbReference type="Rhea" id="RHEA-COMP:10468"/>
        <dbReference type="Rhea" id="RHEA-COMP:18655"/>
        <dbReference type="ChEBI" id="CHEBI:30616"/>
        <dbReference type="ChEBI" id="CHEBI:33019"/>
        <dbReference type="ChEBI" id="CHEBI:37563"/>
        <dbReference type="ChEBI" id="CHEBI:83071"/>
        <dbReference type="ChEBI" id="CHEBI:195187"/>
    </reaction>
    <physiologicalReaction direction="left-to-right" evidence="1">
        <dbReference type="Rhea" id="RHEA:76236"/>
    </physiologicalReaction>
</comment>
<comment type="cofactor">
    <cofactor evidence="1">
        <name>Mg(2+)</name>
        <dbReference type="ChEBI" id="CHEBI:18420"/>
    </cofactor>
    <text evidence="1">Magnesium is required for nucleotidyltransferase activity.</text>
</comment>
<comment type="cofactor">
    <cofactor evidence="1">
        <name>Ni(2+)</name>
        <dbReference type="ChEBI" id="CHEBI:49786"/>
    </cofactor>
    <text evidence="1">Nickel for phosphatase activity.</text>
</comment>
<comment type="subunit">
    <text evidence="1">Monomer. Can also form homodimers and oligomers.</text>
</comment>
<comment type="domain">
    <text evidence="1">Comprises two domains: an N-terminal domain containing the nucleotidyltransferase activity and a C-terminal HD domain associated with both phosphodiesterase and phosphatase activities.</text>
</comment>
<comment type="miscellaneous">
    <text evidence="1">A single active site specifically recognizes both ATP and CTP and is responsible for their addition.</text>
</comment>
<comment type="similarity">
    <text evidence="1">Belongs to the tRNA nucleotidyltransferase/poly(A) polymerase family. Bacterial CCA-adding enzyme type 1 subfamily.</text>
</comment>
<keyword id="KW-0067">ATP-binding</keyword>
<keyword id="KW-0378">Hydrolase</keyword>
<keyword id="KW-0460">Magnesium</keyword>
<keyword id="KW-0479">Metal-binding</keyword>
<keyword id="KW-0511">Multifunctional enzyme</keyword>
<keyword id="KW-0533">Nickel</keyword>
<keyword id="KW-0547">Nucleotide-binding</keyword>
<keyword id="KW-0548">Nucleotidyltransferase</keyword>
<keyword id="KW-1185">Reference proteome</keyword>
<keyword id="KW-0692">RNA repair</keyword>
<keyword id="KW-0694">RNA-binding</keyword>
<keyword id="KW-0808">Transferase</keyword>
<keyword id="KW-0819">tRNA processing</keyword>
<feature type="chain" id="PRO_0000138985" description="Multifunctional CCA protein">
    <location>
        <begin position="1"/>
        <end position="425"/>
    </location>
</feature>
<feature type="domain" description="HD" evidence="1">
    <location>
        <begin position="228"/>
        <end position="329"/>
    </location>
</feature>
<feature type="binding site" evidence="1">
    <location>
        <position position="8"/>
    </location>
    <ligand>
        <name>ATP</name>
        <dbReference type="ChEBI" id="CHEBI:30616"/>
    </ligand>
</feature>
<feature type="binding site" evidence="1">
    <location>
        <position position="8"/>
    </location>
    <ligand>
        <name>CTP</name>
        <dbReference type="ChEBI" id="CHEBI:37563"/>
    </ligand>
</feature>
<feature type="binding site" evidence="1">
    <location>
        <position position="11"/>
    </location>
    <ligand>
        <name>ATP</name>
        <dbReference type="ChEBI" id="CHEBI:30616"/>
    </ligand>
</feature>
<feature type="binding site" evidence="1">
    <location>
        <position position="11"/>
    </location>
    <ligand>
        <name>CTP</name>
        <dbReference type="ChEBI" id="CHEBI:37563"/>
    </ligand>
</feature>
<feature type="binding site" evidence="1">
    <location>
        <position position="21"/>
    </location>
    <ligand>
        <name>Mg(2+)</name>
        <dbReference type="ChEBI" id="CHEBI:18420"/>
    </ligand>
</feature>
<feature type="binding site" evidence="1">
    <location>
        <position position="23"/>
    </location>
    <ligand>
        <name>Mg(2+)</name>
        <dbReference type="ChEBI" id="CHEBI:18420"/>
    </ligand>
</feature>
<feature type="binding site" evidence="1">
    <location>
        <position position="91"/>
    </location>
    <ligand>
        <name>ATP</name>
        <dbReference type="ChEBI" id="CHEBI:30616"/>
    </ligand>
</feature>
<feature type="binding site" evidence="1">
    <location>
        <position position="91"/>
    </location>
    <ligand>
        <name>CTP</name>
        <dbReference type="ChEBI" id="CHEBI:37563"/>
    </ligand>
</feature>
<feature type="binding site" evidence="1">
    <location>
        <position position="137"/>
    </location>
    <ligand>
        <name>ATP</name>
        <dbReference type="ChEBI" id="CHEBI:30616"/>
    </ligand>
</feature>
<feature type="binding site" evidence="1">
    <location>
        <position position="137"/>
    </location>
    <ligand>
        <name>CTP</name>
        <dbReference type="ChEBI" id="CHEBI:37563"/>
    </ligand>
</feature>
<feature type="binding site" evidence="1">
    <location>
        <position position="140"/>
    </location>
    <ligand>
        <name>ATP</name>
        <dbReference type="ChEBI" id="CHEBI:30616"/>
    </ligand>
</feature>
<feature type="binding site" evidence="1">
    <location>
        <position position="140"/>
    </location>
    <ligand>
        <name>CTP</name>
        <dbReference type="ChEBI" id="CHEBI:37563"/>
    </ligand>
</feature>